<accession>Q6LSC4</accession>
<keyword id="KW-0067">ATP-binding</keyword>
<keyword id="KW-0997">Cell inner membrane</keyword>
<keyword id="KW-1003">Cell membrane</keyword>
<keyword id="KW-0472">Membrane</keyword>
<keyword id="KW-0547">Nucleotide-binding</keyword>
<keyword id="KW-0592">Phosphate transport</keyword>
<keyword id="KW-1185">Reference proteome</keyword>
<keyword id="KW-1278">Translocase</keyword>
<keyword id="KW-0813">Transport</keyword>
<evidence type="ECO:0000255" key="1">
    <source>
        <dbReference type="HAMAP-Rule" id="MF_01702"/>
    </source>
</evidence>
<organism>
    <name type="scientific">Photobacterium profundum (strain SS9)</name>
    <dbReference type="NCBI Taxonomy" id="298386"/>
    <lineage>
        <taxon>Bacteria</taxon>
        <taxon>Pseudomonadati</taxon>
        <taxon>Pseudomonadota</taxon>
        <taxon>Gammaproteobacteria</taxon>
        <taxon>Vibrionales</taxon>
        <taxon>Vibrionaceae</taxon>
        <taxon>Photobacterium</taxon>
    </lineage>
</organism>
<protein>
    <recommendedName>
        <fullName evidence="1">Phosphate import ATP-binding protein PstB 2</fullName>
        <ecNumber evidence="1">7.3.2.1</ecNumber>
    </recommendedName>
    <alternativeName>
        <fullName evidence="1">ABC phosphate transporter 2</fullName>
    </alternativeName>
    <alternativeName>
        <fullName evidence="1">Phosphate-transporting ATPase 2</fullName>
    </alternativeName>
</protein>
<name>PSTB2_PHOPR</name>
<feature type="chain" id="PRO_0000272491" description="Phosphate import ATP-binding protein PstB 2">
    <location>
        <begin position="1"/>
        <end position="254"/>
    </location>
</feature>
<feature type="domain" description="ABC transporter" evidence="1">
    <location>
        <begin position="9"/>
        <end position="249"/>
    </location>
</feature>
<feature type="binding site" evidence="1">
    <location>
        <begin position="41"/>
        <end position="48"/>
    </location>
    <ligand>
        <name>ATP</name>
        <dbReference type="ChEBI" id="CHEBI:30616"/>
    </ligand>
</feature>
<comment type="function">
    <text evidence="1">Part of the ABC transporter complex PstSACB involved in phosphate import. Responsible for energy coupling to the transport system.</text>
</comment>
<comment type="catalytic activity">
    <reaction evidence="1">
        <text>phosphate(out) + ATP + H2O = ADP + 2 phosphate(in) + H(+)</text>
        <dbReference type="Rhea" id="RHEA:24440"/>
        <dbReference type="ChEBI" id="CHEBI:15377"/>
        <dbReference type="ChEBI" id="CHEBI:15378"/>
        <dbReference type="ChEBI" id="CHEBI:30616"/>
        <dbReference type="ChEBI" id="CHEBI:43474"/>
        <dbReference type="ChEBI" id="CHEBI:456216"/>
        <dbReference type="EC" id="7.3.2.1"/>
    </reaction>
</comment>
<comment type="subunit">
    <text evidence="1">The complex is composed of two ATP-binding proteins (PstB), two transmembrane proteins (PstC and PstA) and a solute-binding protein (PstS).</text>
</comment>
<comment type="subcellular location">
    <subcellularLocation>
        <location evidence="1">Cell inner membrane</location>
        <topology evidence="1">Peripheral membrane protein</topology>
    </subcellularLocation>
</comment>
<comment type="similarity">
    <text evidence="1">Belongs to the ABC transporter superfamily. Phosphate importer (TC 3.A.1.7) family.</text>
</comment>
<reference key="1">
    <citation type="journal article" date="2005" name="Science">
        <title>Life at depth: Photobacterium profundum genome sequence and expression analysis.</title>
        <authorList>
            <person name="Vezzi A."/>
            <person name="Campanaro S."/>
            <person name="D'Angelo M."/>
            <person name="Simonato F."/>
            <person name="Vitulo N."/>
            <person name="Lauro F.M."/>
            <person name="Cestaro A."/>
            <person name="Malacrida G."/>
            <person name="Simionati B."/>
            <person name="Cannata N."/>
            <person name="Romualdi C."/>
            <person name="Bartlett D.H."/>
            <person name="Valle G."/>
        </authorList>
    </citation>
    <scope>NUCLEOTIDE SEQUENCE [LARGE SCALE GENOMIC DNA]</scope>
    <source>
        <strain>ATCC BAA-1253 / SS9</strain>
    </source>
</reference>
<dbReference type="EC" id="7.3.2.1" evidence="1"/>
<dbReference type="EMBL" id="CR378667">
    <property type="protein sequence ID" value="CAG19802.1"/>
    <property type="molecule type" value="Genomic_DNA"/>
</dbReference>
<dbReference type="SMR" id="Q6LSC4"/>
<dbReference type="STRING" id="298386.PBPRA1391"/>
<dbReference type="KEGG" id="ppr:PBPRA1391"/>
<dbReference type="eggNOG" id="COG1117">
    <property type="taxonomic scope" value="Bacteria"/>
</dbReference>
<dbReference type="HOGENOM" id="CLU_000604_1_22_6"/>
<dbReference type="Proteomes" id="UP000000593">
    <property type="component" value="Chromosome 1"/>
</dbReference>
<dbReference type="GO" id="GO:0005886">
    <property type="term" value="C:plasma membrane"/>
    <property type="evidence" value="ECO:0007669"/>
    <property type="project" value="UniProtKB-SubCell"/>
</dbReference>
<dbReference type="GO" id="GO:0005524">
    <property type="term" value="F:ATP binding"/>
    <property type="evidence" value="ECO:0007669"/>
    <property type="project" value="UniProtKB-KW"/>
</dbReference>
<dbReference type="GO" id="GO:0016887">
    <property type="term" value="F:ATP hydrolysis activity"/>
    <property type="evidence" value="ECO:0007669"/>
    <property type="project" value="InterPro"/>
</dbReference>
<dbReference type="GO" id="GO:0015415">
    <property type="term" value="F:ATPase-coupled phosphate ion transmembrane transporter activity"/>
    <property type="evidence" value="ECO:0007669"/>
    <property type="project" value="UniProtKB-EC"/>
</dbReference>
<dbReference type="GO" id="GO:0035435">
    <property type="term" value="P:phosphate ion transmembrane transport"/>
    <property type="evidence" value="ECO:0007669"/>
    <property type="project" value="InterPro"/>
</dbReference>
<dbReference type="CDD" id="cd03260">
    <property type="entry name" value="ABC_PstB_phosphate_transporter"/>
    <property type="match status" value="1"/>
</dbReference>
<dbReference type="FunFam" id="3.40.50.300:FF:000132">
    <property type="entry name" value="Phosphate import ATP-binding protein PstB"/>
    <property type="match status" value="1"/>
</dbReference>
<dbReference type="Gene3D" id="3.40.50.300">
    <property type="entry name" value="P-loop containing nucleotide triphosphate hydrolases"/>
    <property type="match status" value="1"/>
</dbReference>
<dbReference type="InterPro" id="IPR003593">
    <property type="entry name" value="AAA+_ATPase"/>
</dbReference>
<dbReference type="InterPro" id="IPR003439">
    <property type="entry name" value="ABC_transporter-like_ATP-bd"/>
</dbReference>
<dbReference type="InterPro" id="IPR017871">
    <property type="entry name" value="ABC_transporter-like_CS"/>
</dbReference>
<dbReference type="InterPro" id="IPR027417">
    <property type="entry name" value="P-loop_NTPase"/>
</dbReference>
<dbReference type="InterPro" id="IPR005670">
    <property type="entry name" value="PstB-like"/>
</dbReference>
<dbReference type="NCBIfam" id="TIGR00972">
    <property type="entry name" value="3a0107s01c2"/>
    <property type="match status" value="1"/>
</dbReference>
<dbReference type="PANTHER" id="PTHR43423">
    <property type="entry name" value="ABC TRANSPORTER I FAMILY MEMBER 17"/>
    <property type="match status" value="1"/>
</dbReference>
<dbReference type="PANTHER" id="PTHR43423:SF1">
    <property type="entry name" value="ABC TRANSPORTER I FAMILY MEMBER 17"/>
    <property type="match status" value="1"/>
</dbReference>
<dbReference type="Pfam" id="PF00005">
    <property type="entry name" value="ABC_tran"/>
    <property type="match status" value="1"/>
</dbReference>
<dbReference type="SMART" id="SM00382">
    <property type="entry name" value="AAA"/>
    <property type="match status" value="1"/>
</dbReference>
<dbReference type="SUPFAM" id="SSF52540">
    <property type="entry name" value="P-loop containing nucleoside triphosphate hydrolases"/>
    <property type="match status" value="1"/>
</dbReference>
<dbReference type="PROSITE" id="PS00211">
    <property type="entry name" value="ABC_TRANSPORTER_1"/>
    <property type="match status" value="1"/>
</dbReference>
<dbReference type="PROSITE" id="PS50893">
    <property type="entry name" value="ABC_TRANSPORTER_2"/>
    <property type="match status" value="1"/>
</dbReference>
<dbReference type="PROSITE" id="PS51238">
    <property type="entry name" value="PSTB"/>
    <property type="match status" value="1"/>
</dbReference>
<gene>
    <name evidence="1" type="primary">pstB2</name>
    <name type="ordered locus">PBPRA1391</name>
</gene>
<sequence>MRKMKMNKFNIDNLNLFYGENQALKQICLPIPNRQVTALIGPSGCGKSTLLRCLNRMNDLIEGVKIDGLLSMDGEDVYGNIDVAQLRIKVGMVFQKPNPFPMSIYENVAYGLRAQGIKDKKVLDGVVEQSLRGAALWDEVKDRLKSHAFSLSGGQQQRLCIARTIAMEPEVILMDEPTSALDPIATKKIEDLMESLKKDFTIVIVTHSMQQARRISDRTAFFLMGELVEHDDTHALFSNPRDDRTRGYVNGDFG</sequence>
<proteinExistence type="inferred from homology"/>